<feature type="chain" id="PRO_0000200351" description="Cytochrome b559 subunit beta">
    <location>
        <begin position="1"/>
        <end position="39"/>
    </location>
</feature>
<feature type="transmembrane region" description="Helical" evidence="1">
    <location>
        <begin position="14"/>
        <end position="30"/>
    </location>
</feature>
<feature type="binding site" description="axial binding residue" evidence="1">
    <location>
        <position position="18"/>
    </location>
    <ligand>
        <name>heme</name>
        <dbReference type="ChEBI" id="CHEBI:30413"/>
        <note>ligand shared with alpha subunit</note>
    </ligand>
    <ligandPart>
        <name>Fe</name>
        <dbReference type="ChEBI" id="CHEBI:18248"/>
    </ligandPart>
</feature>
<name>PSBF_ALLTE</name>
<proteinExistence type="inferred from homology"/>
<keyword id="KW-0150">Chloroplast</keyword>
<keyword id="KW-0249">Electron transport</keyword>
<keyword id="KW-0349">Heme</keyword>
<keyword id="KW-0408">Iron</keyword>
<keyword id="KW-0472">Membrane</keyword>
<keyword id="KW-0479">Metal-binding</keyword>
<keyword id="KW-0602">Photosynthesis</keyword>
<keyword id="KW-0604">Photosystem II</keyword>
<keyword id="KW-0934">Plastid</keyword>
<keyword id="KW-0793">Thylakoid</keyword>
<keyword id="KW-0812">Transmembrane</keyword>
<keyword id="KW-1133">Transmembrane helix</keyword>
<keyword id="KW-0813">Transport</keyword>
<dbReference type="EMBL" id="AY147583">
    <property type="protein sequence ID" value="AAN32433.1"/>
    <property type="molecule type" value="Genomic_DNA"/>
</dbReference>
<dbReference type="SMR" id="Q67HC1"/>
<dbReference type="GO" id="GO:0009535">
    <property type="term" value="C:chloroplast thylakoid membrane"/>
    <property type="evidence" value="ECO:0007669"/>
    <property type="project" value="UniProtKB-SubCell"/>
</dbReference>
<dbReference type="GO" id="GO:0009539">
    <property type="term" value="C:photosystem II reaction center"/>
    <property type="evidence" value="ECO:0007669"/>
    <property type="project" value="InterPro"/>
</dbReference>
<dbReference type="GO" id="GO:0009055">
    <property type="term" value="F:electron transfer activity"/>
    <property type="evidence" value="ECO:0007669"/>
    <property type="project" value="UniProtKB-UniRule"/>
</dbReference>
<dbReference type="GO" id="GO:0020037">
    <property type="term" value="F:heme binding"/>
    <property type="evidence" value="ECO:0007669"/>
    <property type="project" value="InterPro"/>
</dbReference>
<dbReference type="GO" id="GO:0005506">
    <property type="term" value="F:iron ion binding"/>
    <property type="evidence" value="ECO:0007669"/>
    <property type="project" value="UniProtKB-UniRule"/>
</dbReference>
<dbReference type="GO" id="GO:0009767">
    <property type="term" value="P:photosynthetic electron transport chain"/>
    <property type="evidence" value="ECO:0007669"/>
    <property type="project" value="InterPro"/>
</dbReference>
<dbReference type="HAMAP" id="MF_00643">
    <property type="entry name" value="PSII_PsbF"/>
    <property type="match status" value="1"/>
</dbReference>
<dbReference type="InterPro" id="IPR006241">
    <property type="entry name" value="PSII_cyt_b559_bsu"/>
</dbReference>
<dbReference type="InterPro" id="IPR006216">
    <property type="entry name" value="PSII_cyt_b559_CS"/>
</dbReference>
<dbReference type="InterPro" id="IPR013081">
    <property type="entry name" value="PSII_cyt_b559_N"/>
</dbReference>
<dbReference type="NCBIfam" id="TIGR01333">
    <property type="entry name" value="cyt_b559_beta"/>
    <property type="match status" value="1"/>
</dbReference>
<dbReference type="Pfam" id="PF00283">
    <property type="entry name" value="Cytochrom_B559"/>
    <property type="match status" value="1"/>
</dbReference>
<dbReference type="PIRSF" id="PIRSF000037">
    <property type="entry name" value="PsbF"/>
    <property type="match status" value="1"/>
</dbReference>
<dbReference type="SUPFAM" id="SSF161045">
    <property type="entry name" value="Cytochrome b559 subunits"/>
    <property type="match status" value="1"/>
</dbReference>
<dbReference type="PROSITE" id="PS00537">
    <property type="entry name" value="CYTOCHROME_B559"/>
    <property type="match status" value="1"/>
</dbReference>
<sequence>MTIDRTYPIFTVRWLAIHGLAVPTVSFLGSISAMQFIQR</sequence>
<gene>
    <name evidence="1" type="primary">psbF</name>
</gene>
<protein>
    <recommendedName>
        <fullName evidence="1">Cytochrome b559 subunit beta</fullName>
    </recommendedName>
    <alternativeName>
        <fullName evidence="1">PSII reaction center subunit VI</fullName>
    </alternativeName>
</protein>
<geneLocation type="chloroplast"/>
<reference key="1">
    <citation type="submission" date="2002-09" db="EMBL/GenBank/DDBJ databases">
        <title>Phylogenetic relationships among the major lineages of Asparagales based on a large chloroplast data set.</title>
        <authorList>
            <person name="McPherson M.A."/>
            <person name="Rai H.S."/>
            <person name="Wong W.A."/>
            <person name="Graham S.W."/>
        </authorList>
    </citation>
    <scope>NUCLEOTIDE SEQUENCE [GENOMIC DNA]</scope>
</reference>
<comment type="function">
    <text evidence="1">This b-type cytochrome is tightly associated with the reaction center of photosystem II (PSII). PSII is a light-driven water:plastoquinone oxidoreductase that uses light energy to abstract electrons from H(2)O, generating O(2) and a proton gradient subsequently used for ATP formation. It consists of a core antenna complex that captures photons, and an electron transfer chain that converts photonic excitation into a charge separation.</text>
</comment>
<comment type="cofactor">
    <cofactor evidence="1">
        <name>heme b</name>
        <dbReference type="ChEBI" id="CHEBI:60344"/>
    </cofactor>
    <text evidence="1">With its partner (PsbE) binds heme. PSII binds additional chlorophylls, carotenoids and specific lipids.</text>
</comment>
<comment type="subunit">
    <text evidence="1">Heterodimer of an alpha subunit and a beta subunit. PSII is composed of 1 copy each of membrane proteins PsbA, PsbB, PsbC, PsbD, PsbE, PsbF, PsbH, PsbI, PsbJ, PsbK, PsbL, PsbM, PsbT, PsbX, PsbY, PsbZ, Psb30/Ycf12, at least 3 peripheral proteins of the oxygen-evolving complex and a large number of cofactors. It forms dimeric complexes.</text>
</comment>
<comment type="subcellular location">
    <subcellularLocation>
        <location evidence="1">Plastid</location>
        <location evidence="1">Chloroplast thylakoid membrane</location>
        <topology evidence="1">Single-pass membrane protein</topology>
    </subcellularLocation>
</comment>
<comment type="similarity">
    <text evidence="1">Belongs to the PsbE/PsbF family.</text>
</comment>
<accession>Q67HC1</accession>
<organism>
    <name type="scientific">Allium textile</name>
    <name type="common">Textile onion</name>
    <name type="synonym">Allium reticulatum</name>
    <dbReference type="NCBI Taxonomy" id="207935"/>
    <lineage>
        <taxon>Eukaryota</taxon>
        <taxon>Viridiplantae</taxon>
        <taxon>Streptophyta</taxon>
        <taxon>Embryophyta</taxon>
        <taxon>Tracheophyta</taxon>
        <taxon>Spermatophyta</taxon>
        <taxon>Magnoliopsida</taxon>
        <taxon>Liliopsida</taxon>
        <taxon>Asparagales</taxon>
        <taxon>Amaryllidaceae</taxon>
        <taxon>Allioideae</taxon>
        <taxon>Allieae</taxon>
        <taxon>Allium</taxon>
    </lineage>
</organism>
<evidence type="ECO:0000255" key="1">
    <source>
        <dbReference type="HAMAP-Rule" id="MF_00643"/>
    </source>
</evidence>